<reference key="1">
    <citation type="journal article" date="2001" name="Nature">
        <title>Genome sequence and gene compaction of the eukaryote parasite Encephalitozoon cuniculi.</title>
        <authorList>
            <person name="Katinka M.D."/>
            <person name="Duprat S."/>
            <person name="Cornillot E."/>
            <person name="Metenier G."/>
            <person name="Thomarat F."/>
            <person name="Prensier G."/>
            <person name="Barbe V."/>
            <person name="Peyretaillade E."/>
            <person name="Brottier P."/>
            <person name="Wincker P."/>
            <person name="Delbac F."/>
            <person name="El Alaoui H."/>
            <person name="Peyret P."/>
            <person name="Saurin W."/>
            <person name="Gouy M."/>
            <person name="Weissenbach J."/>
            <person name="Vivares C.P."/>
        </authorList>
    </citation>
    <scope>NUCLEOTIDE SEQUENCE [LARGE SCALE GENOMIC DNA]</scope>
    <source>
        <strain>GB-M1</strain>
    </source>
</reference>
<feature type="chain" id="PRO_0000223116" description="UPF0328 protein ECU03_0020">
    <location>
        <begin position="1"/>
        <end position="269"/>
    </location>
</feature>
<organism>
    <name type="scientific">Encephalitozoon cuniculi (strain GB-M1)</name>
    <name type="common">Microsporidian parasite</name>
    <dbReference type="NCBI Taxonomy" id="284813"/>
    <lineage>
        <taxon>Eukaryota</taxon>
        <taxon>Fungi</taxon>
        <taxon>Fungi incertae sedis</taxon>
        <taxon>Microsporidia</taxon>
        <taxon>Unikaryonidae</taxon>
        <taxon>Encephalitozoon</taxon>
    </lineage>
</organism>
<proteinExistence type="inferred from homology"/>
<evidence type="ECO:0000305" key="1"/>
<gene>
    <name type="ordered locus">ECU03_0020</name>
</gene>
<keyword id="KW-1185">Reference proteome</keyword>
<name>Y302_ENCCU</name>
<dbReference type="EMBL" id="AL590443">
    <property type="protein sequence ID" value="CAD26149.1"/>
    <property type="molecule type" value="Genomic_DNA"/>
</dbReference>
<dbReference type="RefSeq" id="NP_597514.1">
    <property type="nucleotide sequence ID" value="NM_001040878.1"/>
</dbReference>
<dbReference type="GeneID" id="858676"/>
<dbReference type="KEGG" id="ecu:ECU03_0020"/>
<dbReference type="VEuPathDB" id="MicrosporidiaDB:ECU03_0020"/>
<dbReference type="HOGENOM" id="CLU_059413_0_0_1"/>
<dbReference type="InParanoid" id="Q8SW84"/>
<dbReference type="Proteomes" id="UP000000819">
    <property type="component" value="Chromosome III"/>
</dbReference>
<dbReference type="InterPro" id="IPR019081">
    <property type="entry name" value="UPF0328"/>
</dbReference>
<dbReference type="Pfam" id="PF09591">
    <property type="entry name" value="DUF2463"/>
    <property type="match status" value="1"/>
</dbReference>
<protein>
    <recommendedName>
        <fullName>UPF0328 protein ECU03_0020</fullName>
    </recommendedName>
</protein>
<comment type="similarity">
    <text evidence="1">Belongs to the UPF0328 family.</text>
</comment>
<accession>Q8SW84</accession>
<sequence>MKSISSYLSFAHMNITHTTEQHAENQPHWKTILDIAPFVSITFPAIMCLIFDEDSFEESPFLRFITLLLPFSYSAVQYALLYTNWKSHNKPEPILHTTLYYTLSLLLLAFTIISILSIIPFSLNEWDHAASFFYPIVLPSFTVPPAYLLSSSYFLVPRQIRLTDTVISILISVCSIVNVLLVFKEFNYYPYSAIISSISVLLQLLSEKHCLFKQSPPSTASSRAAVLILTLILAVLVYTFLGYGAIYILDDHFHLLGKMKSILPSEPHQ</sequence>